<accession>Q562C7</accession>
<accession>Q4G054</accession>
<organism>
    <name type="scientific">Rattus norvegicus</name>
    <name type="common">Rat</name>
    <dbReference type="NCBI Taxonomy" id="10116"/>
    <lineage>
        <taxon>Eukaryota</taxon>
        <taxon>Metazoa</taxon>
        <taxon>Chordata</taxon>
        <taxon>Craniata</taxon>
        <taxon>Vertebrata</taxon>
        <taxon>Euteleostomi</taxon>
        <taxon>Mammalia</taxon>
        <taxon>Eutheria</taxon>
        <taxon>Euarchontoglires</taxon>
        <taxon>Glires</taxon>
        <taxon>Rodentia</taxon>
        <taxon>Myomorpha</taxon>
        <taxon>Muroidea</taxon>
        <taxon>Muridae</taxon>
        <taxon>Murinae</taxon>
        <taxon>Rattus</taxon>
    </lineage>
</organism>
<reference key="1">
    <citation type="journal article" date="2004" name="Genome Res.">
        <title>The status, quality, and expansion of the NIH full-length cDNA project: the Mammalian Gene Collection (MGC).</title>
        <authorList>
            <consortium name="The MGC Project Team"/>
        </authorList>
    </citation>
    <scope>NUCLEOTIDE SEQUENCE [LARGE SCALE MRNA]</scope>
    <source>
        <tissue>Liver</tissue>
        <tissue>Thymus</tissue>
    </source>
</reference>
<sequence>MEVKGKKKITGKSPQTSQGKNKFHKNSESSSAKAFPRKAAKEGGPKVTSKNFEKGATKPGKKRVKQFKNKPQGGKGPKDKFQKANKFNKKRKFQPDGKSDESAAKKPKWDDFKKKKKELKQNRQLSDKTNYDVVVRAKHIWESLRRKDCDKEKRVKLMSDLQKLIQGKIKTIAFAHDSTRVIQCLIQYGSEEQRKWAFEELQGDLVELSKAKYSRNIVKKFLMYGSKPQIAEIIRSFKGHVRKMLRHSEASAIVEYAYNDKAILEQRNMLTEELYGNTFQLYKSADHPTLEKVLEVQPGKLELILDEMKQILTPMAQKEAVIKHSLVHKVFLDFFTYAPPKLRSELIEAIREAVVYLAHTHDGARVAMHCLWHGTPKDRKVIVKTMKTYVEKIANGQYSHLVLLAAFDCIDDTKLVKQIIISEVISSLPSIVNDKYGRKVLLYLLSPRAPAHLVPEIIQLLQKGDGNAHSKKDTAIRRRELLESISPALLSYLQGHTREVVLDKSVCVLVSDILGSATGDAQPAMDAIAGLAAEELYPGGKDGELHIAEHPAGHLVLKWLIEQDKKIKENGKEGCFAKTLVECVGMKNLKSWASINRGAIVLSSLLQSCDQDVVNKVKAGLKTLIPTLEKTKSTSKGIQTLLEKLTA</sequence>
<protein>
    <recommendedName>
        <fullName evidence="6">Pumilio homolog 3</fullName>
    </recommendedName>
</protein>
<proteinExistence type="evidence at transcript level"/>
<feature type="chain" id="PRO_0000075931" description="Pumilio homolog 3">
    <location>
        <begin position="1"/>
        <end position="647"/>
    </location>
</feature>
<feature type="domain" description="PUM-HD" evidence="4">
    <location>
        <begin position="142"/>
        <end position="509"/>
    </location>
</feature>
<feature type="repeat" description="Pumilio 1" evidence="1">
    <location>
        <begin position="176"/>
        <end position="211"/>
    </location>
</feature>
<feature type="repeat" description="Pumilio 2" evidence="1">
    <location>
        <begin position="212"/>
        <end position="247"/>
    </location>
</feature>
<feature type="repeat" description="Pumilio 3" evidence="1">
    <location>
        <begin position="248"/>
        <end position="276"/>
    </location>
</feature>
<feature type="repeat" description="Pumilio 4" evidence="1">
    <location>
        <begin position="288"/>
        <end position="324"/>
    </location>
</feature>
<feature type="repeat" description="Pumilio 5" evidence="1">
    <location>
        <begin position="325"/>
        <end position="360"/>
    </location>
</feature>
<feature type="repeat" description="Pumilio 6" evidence="1">
    <location>
        <begin position="361"/>
        <end position="396"/>
    </location>
</feature>
<feature type="repeat" description="Pumilio 7" evidence="1">
    <location>
        <begin position="397"/>
        <end position="434"/>
    </location>
</feature>
<feature type="repeat" description="Pumilio 8" evidence="1">
    <location>
        <begin position="435"/>
        <end position="503"/>
    </location>
</feature>
<feature type="repeat" description="Pumilio 9" evidence="1">
    <location>
        <begin position="504"/>
        <end position="550"/>
    </location>
</feature>
<feature type="repeat" description="Pumilio 10" evidence="1">
    <location>
        <begin position="551"/>
        <end position="595"/>
    </location>
</feature>
<feature type="repeat" description="Pumilio 11" evidence="1">
    <location>
        <begin position="596"/>
        <end position="635"/>
    </location>
</feature>
<feature type="region of interest" description="Disordered" evidence="5">
    <location>
        <begin position="1"/>
        <end position="123"/>
    </location>
</feature>
<feature type="short sequence motif" description="Nuclear localization signal" evidence="1">
    <location>
        <begin position="105"/>
        <end position="117"/>
    </location>
</feature>
<feature type="compositionally biased region" description="Basic residues" evidence="5">
    <location>
        <begin position="1"/>
        <end position="10"/>
    </location>
</feature>
<feature type="compositionally biased region" description="Basic residues" evidence="5">
    <location>
        <begin position="59"/>
        <end position="68"/>
    </location>
</feature>
<feature type="compositionally biased region" description="Basic and acidic residues" evidence="5">
    <location>
        <begin position="93"/>
        <end position="123"/>
    </location>
</feature>
<feature type="modified residue" description="N6-acetyllysine" evidence="2">
    <location>
        <position position="33"/>
    </location>
</feature>
<dbReference type="EMBL" id="BC092579">
    <property type="protein sequence ID" value="AAH92579.1"/>
    <property type="molecule type" value="mRNA"/>
</dbReference>
<dbReference type="EMBL" id="BC098744">
    <property type="protein sequence ID" value="AAH98744.2"/>
    <property type="molecule type" value="mRNA"/>
</dbReference>
<dbReference type="RefSeq" id="NP_001020207.1">
    <property type="nucleotide sequence ID" value="NM_001025036.1"/>
</dbReference>
<dbReference type="RefSeq" id="XP_006231308.1">
    <property type="nucleotide sequence ID" value="XM_006231246.3"/>
</dbReference>
<dbReference type="RefSeq" id="XP_063127780.1">
    <property type="nucleotide sequence ID" value="XM_063271710.1"/>
</dbReference>
<dbReference type="RefSeq" id="XP_063127784.1">
    <property type="nucleotide sequence ID" value="XM_063271714.1"/>
</dbReference>
<dbReference type="SMR" id="Q562C7"/>
<dbReference type="FunCoup" id="Q562C7">
    <property type="interactions" value="2265"/>
</dbReference>
<dbReference type="STRING" id="10116.ENSRNOP00000034834"/>
<dbReference type="iPTMnet" id="Q562C7"/>
<dbReference type="PhosphoSitePlus" id="Q562C7"/>
<dbReference type="jPOST" id="Q562C7"/>
<dbReference type="PaxDb" id="10116-ENSRNOP00000034834"/>
<dbReference type="GeneID" id="499339"/>
<dbReference type="KEGG" id="rno:499339"/>
<dbReference type="AGR" id="RGD:1564753"/>
<dbReference type="CTD" id="9933"/>
<dbReference type="RGD" id="1564753">
    <property type="gene designation" value="Pum3"/>
</dbReference>
<dbReference type="VEuPathDB" id="HostDB:ENSRNOG00000012574"/>
<dbReference type="eggNOG" id="KOG2050">
    <property type="taxonomic scope" value="Eukaryota"/>
</dbReference>
<dbReference type="HOGENOM" id="CLU_013994_0_1_1"/>
<dbReference type="InParanoid" id="Q562C7"/>
<dbReference type="OMA" id="YGPEFSI"/>
<dbReference type="OrthoDB" id="55774at9989"/>
<dbReference type="PhylomeDB" id="Q562C7"/>
<dbReference type="TreeFam" id="TF312954"/>
<dbReference type="PRO" id="PR:Q562C7"/>
<dbReference type="Proteomes" id="UP000002494">
    <property type="component" value="Chromosome 1"/>
</dbReference>
<dbReference type="Bgee" id="ENSRNOG00000012574">
    <property type="expression patterns" value="Expressed in spleen and 19 other cell types or tissues"/>
</dbReference>
<dbReference type="GO" id="GO:0005694">
    <property type="term" value="C:chromosome"/>
    <property type="evidence" value="ECO:0000250"/>
    <property type="project" value="UniProtKB"/>
</dbReference>
<dbReference type="GO" id="GO:0005783">
    <property type="term" value="C:endoplasmic reticulum"/>
    <property type="evidence" value="ECO:0000266"/>
    <property type="project" value="RGD"/>
</dbReference>
<dbReference type="GO" id="GO:0005730">
    <property type="term" value="C:nucleolus"/>
    <property type="evidence" value="ECO:0000250"/>
    <property type="project" value="UniProtKB"/>
</dbReference>
<dbReference type="GO" id="GO:0005654">
    <property type="term" value="C:nucleoplasm"/>
    <property type="evidence" value="ECO:0000250"/>
    <property type="project" value="UniProtKB"/>
</dbReference>
<dbReference type="GO" id="GO:0003677">
    <property type="term" value="F:DNA binding"/>
    <property type="evidence" value="ECO:0007669"/>
    <property type="project" value="UniProtKB-KW"/>
</dbReference>
<dbReference type="GO" id="GO:0003729">
    <property type="term" value="F:mRNA binding"/>
    <property type="evidence" value="ECO:0000318"/>
    <property type="project" value="GO_Central"/>
</dbReference>
<dbReference type="GO" id="GO:0010835">
    <property type="term" value="P:regulation of protein ADP-ribosylation"/>
    <property type="evidence" value="ECO:0000250"/>
    <property type="project" value="UniProtKB"/>
</dbReference>
<dbReference type="GO" id="GO:0006417">
    <property type="term" value="P:regulation of translation"/>
    <property type="evidence" value="ECO:0000318"/>
    <property type="project" value="GO_Central"/>
</dbReference>
<dbReference type="FunFam" id="1.25.10.10:FF:000207">
    <property type="entry name" value="Pumilio RNA-binding family member 3"/>
    <property type="match status" value="1"/>
</dbReference>
<dbReference type="FunFam" id="1.25.10.10:FF:001092">
    <property type="entry name" value="Pumilio RNA-binding family member 3"/>
    <property type="match status" value="1"/>
</dbReference>
<dbReference type="Gene3D" id="1.25.10.10">
    <property type="entry name" value="Leucine-rich Repeat Variant"/>
    <property type="match status" value="2"/>
</dbReference>
<dbReference type="InterPro" id="IPR011989">
    <property type="entry name" value="ARM-like"/>
</dbReference>
<dbReference type="InterPro" id="IPR016024">
    <property type="entry name" value="ARM-type_fold"/>
</dbReference>
<dbReference type="InterPro" id="IPR012959">
    <property type="entry name" value="CPL_dom"/>
</dbReference>
<dbReference type="InterPro" id="IPR033133">
    <property type="entry name" value="PUM-HD"/>
</dbReference>
<dbReference type="InterPro" id="IPR040059">
    <property type="entry name" value="PUM3"/>
</dbReference>
<dbReference type="InterPro" id="IPR001313">
    <property type="entry name" value="Pumilio_RNA-bd_rpt"/>
</dbReference>
<dbReference type="PANTHER" id="PTHR13389">
    <property type="entry name" value="PUMILIO HOMOLOG 3"/>
    <property type="match status" value="1"/>
</dbReference>
<dbReference type="PANTHER" id="PTHR13389:SF0">
    <property type="entry name" value="PUMILIO HOMOLOG 3"/>
    <property type="match status" value="1"/>
</dbReference>
<dbReference type="Pfam" id="PF08144">
    <property type="entry name" value="CPL"/>
    <property type="match status" value="1"/>
</dbReference>
<dbReference type="SMART" id="SM00025">
    <property type="entry name" value="Pumilio"/>
    <property type="match status" value="6"/>
</dbReference>
<dbReference type="SUPFAM" id="SSF48371">
    <property type="entry name" value="ARM repeat"/>
    <property type="match status" value="2"/>
</dbReference>
<dbReference type="PROSITE" id="PS50302">
    <property type="entry name" value="PUM"/>
    <property type="match status" value="5"/>
</dbReference>
<dbReference type="PROSITE" id="PS50303">
    <property type="entry name" value="PUM_HD"/>
    <property type="match status" value="1"/>
</dbReference>
<gene>
    <name evidence="7" type="primary">Pum3</name>
</gene>
<evidence type="ECO:0000250" key="1">
    <source>
        <dbReference type="UniProtKB" id="Q15397"/>
    </source>
</evidence>
<evidence type="ECO:0000250" key="2">
    <source>
        <dbReference type="UniProtKB" id="Q8BKS9"/>
    </source>
</evidence>
<evidence type="ECO:0000250" key="3">
    <source>
        <dbReference type="UniProtKB" id="X1WGX5"/>
    </source>
</evidence>
<evidence type="ECO:0000255" key="4">
    <source>
        <dbReference type="PROSITE-ProRule" id="PRU00318"/>
    </source>
</evidence>
<evidence type="ECO:0000256" key="5">
    <source>
        <dbReference type="SAM" id="MobiDB-lite"/>
    </source>
</evidence>
<evidence type="ECO:0000305" key="6"/>
<evidence type="ECO:0000312" key="7">
    <source>
        <dbReference type="RGD" id="1564753"/>
    </source>
</evidence>
<comment type="function">
    <text evidence="1 3">Inhibits the poly(ADP-ribosyl)ation activity of PARP1 and the degradation of PARP1 by CASP3 following genotoxic stress. Binds to double-stranded RNA or DNA without sequence specificity. Involved in development of the eye and of primordial germ cells.</text>
</comment>
<comment type="subunit">
    <text evidence="1">Interacts with PARP1 (via catalytic domain).</text>
</comment>
<comment type="subcellular location">
    <subcellularLocation>
        <location evidence="1">Nucleus</location>
        <location evidence="1">Nucleolus</location>
    </subcellularLocation>
    <subcellularLocation>
        <location evidence="1">Nucleus</location>
        <location evidence="1">Nucleoplasm</location>
    </subcellularLocation>
    <subcellularLocation>
        <location evidence="1">Chromosome</location>
    </subcellularLocation>
    <text evidence="1">Localizes predominantly in the nucleolus with minor punctate signals in the nucleoplasm.</text>
</comment>
<comment type="domain">
    <text evidence="1">A 90 degree bend between Pumilio repeats 3 and 4 gives rise to a L-shaped protein.</text>
</comment>
<keyword id="KW-0007">Acetylation</keyword>
<keyword id="KW-0158">Chromosome</keyword>
<keyword id="KW-0238">DNA-binding</keyword>
<keyword id="KW-0539">Nucleus</keyword>
<keyword id="KW-1185">Reference proteome</keyword>
<keyword id="KW-0677">Repeat</keyword>
<keyword id="KW-0694">RNA-binding</keyword>
<name>PUM3_RAT</name>